<proteinExistence type="inferred from homology"/>
<name>RS16_ACIC5</name>
<keyword id="KW-1185">Reference proteome</keyword>
<keyword id="KW-0687">Ribonucleoprotein</keyword>
<keyword id="KW-0689">Ribosomal protein</keyword>
<gene>
    <name evidence="1" type="primary">rpsP</name>
    <name type="ordered locus">ACP_2809</name>
</gene>
<reference key="1">
    <citation type="journal article" date="2009" name="Appl. Environ. Microbiol.">
        <title>Three genomes from the phylum Acidobacteria provide insight into the lifestyles of these microorganisms in soils.</title>
        <authorList>
            <person name="Ward N.L."/>
            <person name="Challacombe J.F."/>
            <person name="Janssen P.H."/>
            <person name="Henrissat B."/>
            <person name="Coutinho P.M."/>
            <person name="Wu M."/>
            <person name="Xie G."/>
            <person name="Haft D.H."/>
            <person name="Sait M."/>
            <person name="Badger J."/>
            <person name="Barabote R.D."/>
            <person name="Bradley B."/>
            <person name="Brettin T.S."/>
            <person name="Brinkac L.M."/>
            <person name="Bruce D."/>
            <person name="Creasy T."/>
            <person name="Daugherty S.C."/>
            <person name="Davidsen T.M."/>
            <person name="DeBoy R.T."/>
            <person name="Detter J.C."/>
            <person name="Dodson R.J."/>
            <person name="Durkin A.S."/>
            <person name="Ganapathy A."/>
            <person name="Gwinn-Giglio M."/>
            <person name="Han C.S."/>
            <person name="Khouri H."/>
            <person name="Kiss H."/>
            <person name="Kothari S.P."/>
            <person name="Madupu R."/>
            <person name="Nelson K.E."/>
            <person name="Nelson W.C."/>
            <person name="Paulsen I."/>
            <person name="Penn K."/>
            <person name="Ren Q."/>
            <person name="Rosovitz M.J."/>
            <person name="Selengut J.D."/>
            <person name="Shrivastava S."/>
            <person name="Sullivan S.A."/>
            <person name="Tapia R."/>
            <person name="Thompson L.S."/>
            <person name="Watkins K.L."/>
            <person name="Yang Q."/>
            <person name="Yu C."/>
            <person name="Zafar N."/>
            <person name="Zhou L."/>
            <person name="Kuske C.R."/>
        </authorList>
    </citation>
    <scope>NUCLEOTIDE SEQUENCE [LARGE SCALE GENOMIC DNA]</scope>
    <source>
        <strain>ATCC 51196 / DSM 11244 / BCRC 80197 / JCM 7670 / NBRC 15755 / NCIMB 13165 / 161</strain>
    </source>
</reference>
<organism>
    <name type="scientific">Acidobacterium capsulatum (strain ATCC 51196 / DSM 11244 / BCRC 80197 / JCM 7670 / NBRC 15755 / NCIMB 13165 / 161)</name>
    <dbReference type="NCBI Taxonomy" id="240015"/>
    <lineage>
        <taxon>Bacteria</taxon>
        <taxon>Pseudomonadati</taxon>
        <taxon>Acidobacteriota</taxon>
        <taxon>Terriglobia</taxon>
        <taxon>Terriglobales</taxon>
        <taxon>Acidobacteriaceae</taxon>
        <taxon>Acidobacterium</taxon>
    </lineage>
</organism>
<comment type="similarity">
    <text evidence="1">Belongs to the bacterial ribosomal protein bS16 family.</text>
</comment>
<feature type="chain" id="PRO_1000196309" description="Small ribosomal subunit protein bS16">
    <location>
        <begin position="1"/>
        <end position="82"/>
    </location>
</feature>
<protein>
    <recommendedName>
        <fullName evidence="1">Small ribosomal subunit protein bS16</fullName>
    </recommendedName>
    <alternativeName>
        <fullName evidence="2">30S ribosomal protein S16</fullName>
    </alternativeName>
</protein>
<sequence length="82" mass="9274">MVMIRLARMGARKQPYYRIVVIEKRSARNGRSLEVVGTYNPRTNPASVELKRDRIDYWTGKGAQMSDRVAKLVQQNPAPAAA</sequence>
<dbReference type="EMBL" id="CP001472">
    <property type="protein sequence ID" value="ACO33354.1"/>
    <property type="molecule type" value="Genomic_DNA"/>
</dbReference>
<dbReference type="SMR" id="C1F3B5"/>
<dbReference type="FunCoup" id="C1F3B5">
    <property type="interactions" value="539"/>
</dbReference>
<dbReference type="STRING" id="240015.ACP_2809"/>
<dbReference type="KEGG" id="aca:ACP_2809"/>
<dbReference type="eggNOG" id="COG0228">
    <property type="taxonomic scope" value="Bacteria"/>
</dbReference>
<dbReference type="HOGENOM" id="CLU_100590_5_1_0"/>
<dbReference type="InParanoid" id="C1F3B5"/>
<dbReference type="Proteomes" id="UP000002207">
    <property type="component" value="Chromosome"/>
</dbReference>
<dbReference type="GO" id="GO:0005737">
    <property type="term" value="C:cytoplasm"/>
    <property type="evidence" value="ECO:0007669"/>
    <property type="project" value="UniProtKB-ARBA"/>
</dbReference>
<dbReference type="GO" id="GO:0015935">
    <property type="term" value="C:small ribosomal subunit"/>
    <property type="evidence" value="ECO:0007669"/>
    <property type="project" value="TreeGrafter"/>
</dbReference>
<dbReference type="GO" id="GO:0003735">
    <property type="term" value="F:structural constituent of ribosome"/>
    <property type="evidence" value="ECO:0007669"/>
    <property type="project" value="InterPro"/>
</dbReference>
<dbReference type="GO" id="GO:0006412">
    <property type="term" value="P:translation"/>
    <property type="evidence" value="ECO:0007669"/>
    <property type="project" value="UniProtKB-UniRule"/>
</dbReference>
<dbReference type="Gene3D" id="3.30.1320.10">
    <property type="match status" value="1"/>
</dbReference>
<dbReference type="HAMAP" id="MF_00385">
    <property type="entry name" value="Ribosomal_bS16"/>
    <property type="match status" value="1"/>
</dbReference>
<dbReference type="InterPro" id="IPR000307">
    <property type="entry name" value="Ribosomal_bS16"/>
</dbReference>
<dbReference type="InterPro" id="IPR020592">
    <property type="entry name" value="Ribosomal_bS16_CS"/>
</dbReference>
<dbReference type="InterPro" id="IPR023803">
    <property type="entry name" value="Ribosomal_bS16_dom_sf"/>
</dbReference>
<dbReference type="NCBIfam" id="TIGR00002">
    <property type="entry name" value="S16"/>
    <property type="match status" value="1"/>
</dbReference>
<dbReference type="PANTHER" id="PTHR12919">
    <property type="entry name" value="30S RIBOSOMAL PROTEIN S16"/>
    <property type="match status" value="1"/>
</dbReference>
<dbReference type="PANTHER" id="PTHR12919:SF20">
    <property type="entry name" value="SMALL RIBOSOMAL SUBUNIT PROTEIN BS16M"/>
    <property type="match status" value="1"/>
</dbReference>
<dbReference type="Pfam" id="PF00886">
    <property type="entry name" value="Ribosomal_S16"/>
    <property type="match status" value="1"/>
</dbReference>
<dbReference type="SUPFAM" id="SSF54565">
    <property type="entry name" value="Ribosomal protein S16"/>
    <property type="match status" value="1"/>
</dbReference>
<dbReference type="PROSITE" id="PS00732">
    <property type="entry name" value="RIBOSOMAL_S16"/>
    <property type="match status" value="1"/>
</dbReference>
<accession>C1F3B5</accession>
<evidence type="ECO:0000255" key="1">
    <source>
        <dbReference type="HAMAP-Rule" id="MF_00385"/>
    </source>
</evidence>
<evidence type="ECO:0000305" key="2"/>